<keyword id="KW-0031">Aminopeptidase</keyword>
<keyword id="KW-0963">Cytoplasm</keyword>
<keyword id="KW-0378">Hydrolase</keyword>
<keyword id="KW-0479">Metal-binding</keyword>
<keyword id="KW-0482">Metalloprotease</keyword>
<keyword id="KW-0645">Protease</keyword>
<keyword id="KW-1185">Reference proteome</keyword>
<keyword id="KW-0862">Zinc</keyword>
<sequence>MIKWPWKVQESAHQTALPWQEALSIPLLTCLTEQEQSKLVTLAERFLQQKRLVPLQGFELDSLRSCRIALLFCLPVLELGLEWLDGFHEVLIYPAPFVVDDEWEDDIGLVHNQRIVQSGQSWQQGPIVLNWLDIQDSFDASGFNLIIHEVAHKLDTRNGDRASGVPFIPLREVAGWEHDLHAAMNNIQEEIELVGENAASIDAYAASDPAECFAVLSEYFFSAPELFAPRFPSLWQRFCQFYQQDPLQRLHHANDTDSFSATNVH</sequence>
<protein>
    <recommendedName>
        <fullName evidence="1">Mlc titration factor A</fullName>
    </recommendedName>
    <alternativeName>
        <fullName evidence="1">Probable zinc metallopeptidase MtfA</fullName>
        <ecNumber evidence="1">3.4.11.-</ecNumber>
    </alternativeName>
</protein>
<evidence type="ECO:0000255" key="1">
    <source>
        <dbReference type="HAMAP-Rule" id="MF_01593"/>
    </source>
</evidence>
<evidence type="ECO:0000305" key="2"/>
<comment type="function">
    <text evidence="1">Involved in the modulation of the activity of the glucose-phosphotransferase system (glucose-PTS). Interacts with the transcriptional repressor Mlc, preventing its interaction with DNA and leading to the modulation of expression of genes regulated by Mlc, including ptsG, which encodes the PTS system glucose-specific EIICB component.</text>
</comment>
<comment type="function">
    <text evidence="1">Shows zinc-dependent metallopeptidase activity.</text>
</comment>
<comment type="cofactor">
    <cofactor evidence="1">
        <name>Zn(2+)</name>
        <dbReference type="ChEBI" id="CHEBI:29105"/>
    </cofactor>
    <text evidence="1">Binds 1 zinc ion per subunit.</text>
</comment>
<comment type="subunit">
    <text evidence="1">Interacts with Mlc.</text>
</comment>
<comment type="subcellular location">
    <subcellularLocation>
        <location evidence="1">Cytoplasm</location>
    </subcellularLocation>
</comment>
<comment type="similarity">
    <text evidence="1">Belongs to the MtfA family.</text>
</comment>
<comment type="sequence caution" evidence="2">
    <conflict type="erroneous initiation">
        <sequence resource="EMBL-CDS" id="AAG57040"/>
    </conflict>
    <text>Extended N-terminus.</text>
</comment>
<gene>
    <name evidence="1" type="primary">mtfA</name>
    <name type="ordered locus">Z3132</name>
    <name type="ordered locus">ECs2774</name>
</gene>
<dbReference type="EC" id="3.4.11.-" evidence="1"/>
<dbReference type="EMBL" id="AE005174">
    <property type="protein sequence ID" value="AAG57040.1"/>
    <property type="status" value="ALT_INIT"/>
    <property type="molecule type" value="Genomic_DNA"/>
</dbReference>
<dbReference type="EMBL" id="BA000007">
    <property type="protein sequence ID" value="BAB36197.2"/>
    <property type="molecule type" value="Genomic_DNA"/>
</dbReference>
<dbReference type="PIR" id="C64962">
    <property type="entry name" value="C64962"/>
</dbReference>
<dbReference type="PIR" id="D85822">
    <property type="entry name" value="D85822"/>
</dbReference>
<dbReference type="PIR" id="F90975">
    <property type="entry name" value="F90975"/>
</dbReference>
<dbReference type="RefSeq" id="NP_310801.2">
    <property type="nucleotide sequence ID" value="NC_002695.1"/>
</dbReference>
<dbReference type="RefSeq" id="WP_001302302.1">
    <property type="nucleotide sequence ID" value="NZ_VOAI01000073.1"/>
</dbReference>
<dbReference type="SMR" id="Q8X8V8"/>
<dbReference type="STRING" id="155864.Z3132"/>
<dbReference type="MEROPS" id="M90.001"/>
<dbReference type="GeneID" id="75205786"/>
<dbReference type="GeneID" id="914176"/>
<dbReference type="KEGG" id="ece:Z3132"/>
<dbReference type="KEGG" id="ecs:ECs_2774"/>
<dbReference type="PATRIC" id="fig|386585.9.peg.2906"/>
<dbReference type="eggNOG" id="COG3228">
    <property type="taxonomic scope" value="Bacteria"/>
</dbReference>
<dbReference type="HOGENOM" id="CLU_063037_0_1_6"/>
<dbReference type="OMA" id="EHSGEAW"/>
<dbReference type="Proteomes" id="UP000000558">
    <property type="component" value="Chromosome"/>
</dbReference>
<dbReference type="Proteomes" id="UP000002519">
    <property type="component" value="Chromosome"/>
</dbReference>
<dbReference type="GO" id="GO:0005829">
    <property type="term" value="C:cytosol"/>
    <property type="evidence" value="ECO:0007669"/>
    <property type="project" value="TreeGrafter"/>
</dbReference>
<dbReference type="GO" id="GO:0004177">
    <property type="term" value="F:aminopeptidase activity"/>
    <property type="evidence" value="ECO:0007669"/>
    <property type="project" value="UniProtKB-UniRule"/>
</dbReference>
<dbReference type="GO" id="GO:0008237">
    <property type="term" value="F:metallopeptidase activity"/>
    <property type="evidence" value="ECO:0007669"/>
    <property type="project" value="UniProtKB-UniRule"/>
</dbReference>
<dbReference type="GO" id="GO:0008270">
    <property type="term" value="F:zinc ion binding"/>
    <property type="evidence" value="ECO:0007669"/>
    <property type="project" value="UniProtKB-UniRule"/>
</dbReference>
<dbReference type="GO" id="GO:0006508">
    <property type="term" value="P:proteolysis"/>
    <property type="evidence" value="ECO:0007669"/>
    <property type="project" value="UniProtKB-KW"/>
</dbReference>
<dbReference type="CDD" id="cd20169">
    <property type="entry name" value="Peptidase_M90_mtfA"/>
    <property type="match status" value="1"/>
</dbReference>
<dbReference type="FunFam" id="1.10.472.150:FF:000001">
    <property type="entry name" value="Protein MtfA"/>
    <property type="match status" value="1"/>
</dbReference>
<dbReference type="FunFam" id="3.40.390.10:FF:000012">
    <property type="entry name" value="Protein MtfA"/>
    <property type="match status" value="1"/>
</dbReference>
<dbReference type="Gene3D" id="3.40.390.10">
    <property type="entry name" value="Collagenase (Catalytic Domain)"/>
    <property type="match status" value="1"/>
</dbReference>
<dbReference type="Gene3D" id="1.10.472.150">
    <property type="entry name" value="Glucose-regulated metallo-peptidase M90, N-terminal domain"/>
    <property type="match status" value="1"/>
</dbReference>
<dbReference type="HAMAP" id="MF_01593">
    <property type="entry name" value="MtfA"/>
    <property type="match status" value="1"/>
</dbReference>
<dbReference type="InterPro" id="IPR024079">
    <property type="entry name" value="MetalloPept_cat_dom_sf"/>
</dbReference>
<dbReference type="InterPro" id="IPR057256">
    <property type="entry name" value="MtfA_enterob"/>
</dbReference>
<dbReference type="InterPro" id="IPR010384">
    <property type="entry name" value="MtfA_fam"/>
</dbReference>
<dbReference type="InterPro" id="IPR042252">
    <property type="entry name" value="MtfA_N"/>
</dbReference>
<dbReference type="NCBIfam" id="NF011939">
    <property type="entry name" value="PRK15410.1"/>
    <property type="match status" value="1"/>
</dbReference>
<dbReference type="PANTHER" id="PTHR30164">
    <property type="entry name" value="MTFA PEPTIDASE"/>
    <property type="match status" value="1"/>
</dbReference>
<dbReference type="PANTHER" id="PTHR30164:SF2">
    <property type="entry name" value="PROTEIN MTFA"/>
    <property type="match status" value="1"/>
</dbReference>
<dbReference type="Pfam" id="PF06167">
    <property type="entry name" value="Peptidase_M90"/>
    <property type="match status" value="1"/>
</dbReference>
<dbReference type="SUPFAM" id="SSF55486">
    <property type="entry name" value="Metalloproteases ('zincins'), catalytic domain"/>
    <property type="match status" value="1"/>
</dbReference>
<reference key="1">
    <citation type="journal article" date="2001" name="Nature">
        <title>Genome sequence of enterohaemorrhagic Escherichia coli O157:H7.</title>
        <authorList>
            <person name="Perna N.T."/>
            <person name="Plunkett G. III"/>
            <person name="Burland V."/>
            <person name="Mau B."/>
            <person name="Glasner J.D."/>
            <person name="Rose D.J."/>
            <person name="Mayhew G.F."/>
            <person name="Evans P.S."/>
            <person name="Gregor J."/>
            <person name="Kirkpatrick H.A."/>
            <person name="Posfai G."/>
            <person name="Hackett J."/>
            <person name="Klink S."/>
            <person name="Boutin A."/>
            <person name="Shao Y."/>
            <person name="Miller L."/>
            <person name="Grotbeck E.J."/>
            <person name="Davis N.W."/>
            <person name="Lim A."/>
            <person name="Dimalanta E.T."/>
            <person name="Potamousis K."/>
            <person name="Apodaca J."/>
            <person name="Anantharaman T.S."/>
            <person name="Lin J."/>
            <person name="Yen G."/>
            <person name="Schwartz D.C."/>
            <person name="Welch R.A."/>
            <person name="Blattner F.R."/>
        </authorList>
    </citation>
    <scope>NUCLEOTIDE SEQUENCE [LARGE SCALE GENOMIC DNA]</scope>
    <source>
        <strain>O157:H7 / EDL933 / ATCC 700927 / EHEC</strain>
    </source>
</reference>
<reference key="2">
    <citation type="journal article" date="2001" name="DNA Res.">
        <title>Complete genome sequence of enterohemorrhagic Escherichia coli O157:H7 and genomic comparison with a laboratory strain K-12.</title>
        <authorList>
            <person name="Hayashi T."/>
            <person name="Makino K."/>
            <person name="Ohnishi M."/>
            <person name="Kurokawa K."/>
            <person name="Ishii K."/>
            <person name="Yokoyama K."/>
            <person name="Han C.-G."/>
            <person name="Ohtsubo E."/>
            <person name="Nakayama K."/>
            <person name="Murata T."/>
            <person name="Tanaka M."/>
            <person name="Tobe T."/>
            <person name="Iida T."/>
            <person name="Takami H."/>
            <person name="Honda T."/>
            <person name="Sasakawa C."/>
            <person name="Ogasawara N."/>
            <person name="Yasunaga T."/>
            <person name="Kuhara S."/>
            <person name="Shiba T."/>
            <person name="Hattori M."/>
            <person name="Shinagawa H."/>
        </authorList>
    </citation>
    <scope>NUCLEOTIDE SEQUENCE [LARGE SCALE GENOMIC DNA]</scope>
    <source>
        <strain>O157:H7 / Sakai / RIMD 0509952 / EHEC</strain>
    </source>
</reference>
<name>MTFA_ECO57</name>
<accession>Q8X8V8</accession>
<accession>Q7ACT3</accession>
<proteinExistence type="inferred from homology"/>
<feature type="chain" id="PRO_0000316312" description="Mlc titration factor A">
    <location>
        <begin position="1"/>
        <end position="265"/>
    </location>
</feature>
<feature type="binding site" evidence="1">
    <location>
        <position position="111"/>
    </location>
    <ligand>
        <name>Zn(2+)</name>
        <dbReference type="ChEBI" id="CHEBI:29105"/>
    </ligand>
</feature>
<feature type="binding site" evidence="1">
    <location>
        <position position="148"/>
    </location>
    <ligand>
        <name>Zn(2+)</name>
        <dbReference type="ChEBI" id="CHEBI:29105"/>
    </ligand>
</feature>
<feature type="binding site" evidence="1">
    <location>
        <position position="152"/>
    </location>
    <ligand>
        <name>Zn(2+)</name>
        <dbReference type="ChEBI" id="CHEBI:29105"/>
    </ligand>
</feature>
<feature type="binding site" evidence="1">
    <location>
        <position position="211"/>
    </location>
    <ligand>
        <name>Zn(2+)</name>
        <dbReference type="ChEBI" id="CHEBI:29105"/>
    </ligand>
</feature>
<organism>
    <name type="scientific">Escherichia coli O157:H7</name>
    <dbReference type="NCBI Taxonomy" id="83334"/>
    <lineage>
        <taxon>Bacteria</taxon>
        <taxon>Pseudomonadati</taxon>
        <taxon>Pseudomonadota</taxon>
        <taxon>Gammaproteobacteria</taxon>
        <taxon>Enterobacterales</taxon>
        <taxon>Enterobacteriaceae</taxon>
        <taxon>Escherichia</taxon>
    </lineage>
</organism>